<sequence length="656" mass="73280">MITKQSSNESFDVIVVGGGHAGCEAALTSARLGLNTALFTLNLDRIAWQPCNPAVGGPAKSQLVHEVDALGGIIGKLADLTALQKRVLNASRGPAVRALRAQTDKRSYAHEMLKILQNTPNLKIREAMVTGLEVEHYPNQIDQKTPEIQERIGFIKGIKTYFGSVFHAKAVVLTTGTFLGGRIWIGNQSMSAGRAGEQASEGLTEELKKLGFTTDRLKTGTPARVDRRTIDLDSLDEQLSDASDKFFSFDPLSWKSGEQMSCHITRTTKQTHQLIKNNLHLTPIYGGFIDSKGPRYCPSIEDKIVRFADKDSHQIFLEPEGRDTPEMYVQGFSTGLPENLQLELLRTLPGLQNCVMLRPAYAVEYDYIPATQLEATLETKRISGLYSAGQLNGTTGYEEAAAQGLVAGLNAARLVNNKEGIIFERESSYIGTMIDDLVTKDLKEPYRVLTSRSEYRLILRGDNADRRLTPLGYQLGLIDERRWKIFNAKQQLINQEKERLEKERIKESDKSAKEIYSSTGTPIKGSLTLANFLRRTNIHYKDLITFNLTTQSIPLDVEEGVEIDIKYSGYLERQKAQINQLKQQSKKLLPKNLNYNNIETLSKEAREKLTISQPKSLGHAAQLPGVSKADLTALLVWLKIEKMKKVKRKDSLQITN</sequence>
<organism>
    <name type="scientific">Prochlorococcus marinus (strain NATL2A)</name>
    <dbReference type="NCBI Taxonomy" id="59920"/>
    <lineage>
        <taxon>Bacteria</taxon>
        <taxon>Bacillati</taxon>
        <taxon>Cyanobacteriota</taxon>
        <taxon>Cyanophyceae</taxon>
        <taxon>Synechococcales</taxon>
        <taxon>Prochlorococcaceae</taxon>
        <taxon>Prochlorococcus</taxon>
    </lineage>
</organism>
<reference key="1">
    <citation type="journal article" date="2007" name="PLoS Genet.">
        <title>Patterns and implications of gene gain and loss in the evolution of Prochlorococcus.</title>
        <authorList>
            <person name="Kettler G.C."/>
            <person name="Martiny A.C."/>
            <person name="Huang K."/>
            <person name="Zucker J."/>
            <person name="Coleman M.L."/>
            <person name="Rodrigue S."/>
            <person name="Chen F."/>
            <person name="Lapidus A."/>
            <person name="Ferriera S."/>
            <person name="Johnson J."/>
            <person name="Steglich C."/>
            <person name="Church G.M."/>
            <person name="Richardson P."/>
            <person name="Chisholm S.W."/>
        </authorList>
    </citation>
    <scope>NUCLEOTIDE SEQUENCE [LARGE SCALE GENOMIC DNA]</scope>
    <source>
        <strain>NATL2A</strain>
    </source>
</reference>
<accession>Q46IB4</accession>
<evidence type="ECO:0000255" key="1">
    <source>
        <dbReference type="HAMAP-Rule" id="MF_00129"/>
    </source>
</evidence>
<feature type="chain" id="PRO_1000016640" description="tRNA uridine 5-carboxymethylaminomethyl modification enzyme MnmG">
    <location>
        <begin position="1"/>
        <end position="656"/>
    </location>
</feature>
<feature type="binding site" evidence="1">
    <location>
        <begin position="17"/>
        <end position="22"/>
    </location>
    <ligand>
        <name>FAD</name>
        <dbReference type="ChEBI" id="CHEBI:57692"/>
    </ligand>
</feature>
<feature type="binding site" evidence="1">
    <location>
        <position position="129"/>
    </location>
    <ligand>
        <name>FAD</name>
        <dbReference type="ChEBI" id="CHEBI:57692"/>
    </ligand>
</feature>
<feature type="binding site" evidence="1">
    <location>
        <position position="200"/>
    </location>
    <ligand>
        <name>FAD</name>
        <dbReference type="ChEBI" id="CHEBI:57692"/>
    </ligand>
</feature>
<feature type="binding site" evidence="1">
    <location>
        <begin position="293"/>
        <end position="307"/>
    </location>
    <ligand>
        <name>NAD(+)</name>
        <dbReference type="ChEBI" id="CHEBI:57540"/>
    </ligand>
</feature>
<feature type="binding site" evidence="1">
    <location>
        <position position="390"/>
    </location>
    <ligand>
        <name>FAD</name>
        <dbReference type="ChEBI" id="CHEBI:57692"/>
    </ligand>
</feature>
<comment type="function">
    <text evidence="1">NAD-binding protein involved in the addition of a carboxymethylaminomethyl (cmnm) group at the wobble position (U34) of certain tRNAs, forming tRNA-cmnm(5)s(2)U34.</text>
</comment>
<comment type="cofactor">
    <cofactor evidence="1">
        <name>FAD</name>
        <dbReference type="ChEBI" id="CHEBI:57692"/>
    </cofactor>
</comment>
<comment type="subunit">
    <text evidence="1">Homodimer. Heterotetramer of two MnmE and two MnmG subunits.</text>
</comment>
<comment type="subcellular location">
    <subcellularLocation>
        <location evidence="1">Cytoplasm</location>
    </subcellularLocation>
</comment>
<comment type="similarity">
    <text evidence="1">Belongs to the MnmG family.</text>
</comment>
<proteinExistence type="inferred from homology"/>
<keyword id="KW-0963">Cytoplasm</keyword>
<keyword id="KW-0274">FAD</keyword>
<keyword id="KW-0285">Flavoprotein</keyword>
<keyword id="KW-0520">NAD</keyword>
<keyword id="KW-1185">Reference proteome</keyword>
<keyword id="KW-0819">tRNA processing</keyword>
<gene>
    <name evidence="1" type="primary">mnmG</name>
    <name evidence="1" type="synonym">gidA</name>
    <name type="ordered locus">PMN2A_1274</name>
</gene>
<protein>
    <recommendedName>
        <fullName evidence="1">tRNA uridine 5-carboxymethylaminomethyl modification enzyme MnmG</fullName>
    </recommendedName>
    <alternativeName>
        <fullName evidence="1">Glucose-inhibited division protein A</fullName>
    </alternativeName>
</protein>
<dbReference type="EMBL" id="CP000095">
    <property type="protein sequence ID" value="AAZ58764.1"/>
    <property type="molecule type" value="Genomic_DNA"/>
</dbReference>
<dbReference type="RefSeq" id="WP_011295618.1">
    <property type="nucleotide sequence ID" value="NC_007335.2"/>
</dbReference>
<dbReference type="SMR" id="Q46IB4"/>
<dbReference type="STRING" id="59920.PMN2A_1274"/>
<dbReference type="KEGG" id="pmn:PMN2A_1274"/>
<dbReference type="HOGENOM" id="CLU_007831_2_2_3"/>
<dbReference type="OrthoDB" id="9815560at2"/>
<dbReference type="PhylomeDB" id="Q46IB4"/>
<dbReference type="Proteomes" id="UP000002535">
    <property type="component" value="Chromosome"/>
</dbReference>
<dbReference type="GO" id="GO:0005737">
    <property type="term" value="C:cytoplasm"/>
    <property type="evidence" value="ECO:0007669"/>
    <property type="project" value="UniProtKB-SubCell"/>
</dbReference>
<dbReference type="GO" id="GO:0050660">
    <property type="term" value="F:flavin adenine dinucleotide binding"/>
    <property type="evidence" value="ECO:0007669"/>
    <property type="project" value="UniProtKB-UniRule"/>
</dbReference>
<dbReference type="GO" id="GO:0030488">
    <property type="term" value="P:tRNA methylation"/>
    <property type="evidence" value="ECO:0007669"/>
    <property type="project" value="TreeGrafter"/>
</dbReference>
<dbReference type="GO" id="GO:0002098">
    <property type="term" value="P:tRNA wobble uridine modification"/>
    <property type="evidence" value="ECO:0007669"/>
    <property type="project" value="InterPro"/>
</dbReference>
<dbReference type="FunFam" id="1.10.10.1800:FF:000001">
    <property type="entry name" value="tRNA uridine 5-carboxymethylaminomethyl modification enzyme MnmG"/>
    <property type="match status" value="1"/>
</dbReference>
<dbReference type="FunFam" id="1.10.150.570:FF:000001">
    <property type="entry name" value="tRNA uridine 5-carboxymethylaminomethyl modification enzyme MnmG"/>
    <property type="match status" value="1"/>
</dbReference>
<dbReference type="FunFam" id="3.50.50.60:FF:000094">
    <property type="entry name" value="tRNA uridine 5-carboxymethylaminomethyl modification enzyme MnmG"/>
    <property type="match status" value="1"/>
</dbReference>
<dbReference type="FunFam" id="3.50.50.60:FF:000119">
    <property type="entry name" value="tRNA uridine 5-carboxymethylaminomethyl modification enzyme MnmG"/>
    <property type="match status" value="1"/>
</dbReference>
<dbReference type="Gene3D" id="3.50.50.60">
    <property type="entry name" value="FAD/NAD(P)-binding domain"/>
    <property type="match status" value="2"/>
</dbReference>
<dbReference type="Gene3D" id="1.10.150.570">
    <property type="entry name" value="GidA associated domain, C-terminal subdomain"/>
    <property type="match status" value="1"/>
</dbReference>
<dbReference type="Gene3D" id="1.10.10.1800">
    <property type="entry name" value="tRNA uridine 5-carboxymethylaminomethyl modification enzyme MnmG/GidA"/>
    <property type="match status" value="1"/>
</dbReference>
<dbReference type="HAMAP" id="MF_00129">
    <property type="entry name" value="MnmG_GidA"/>
    <property type="match status" value="1"/>
</dbReference>
<dbReference type="InterPro" id="IPR036188">
    <property type="entry name" value="FAD/NAD-bd_sf"/>
</dbReference>
<dbReference type="InterPro" id="IPR049312">
    <property type="entry name" value="GIDA_C_N"/>
</dbReference>
<dbReference type="InterPro" id="IPR004416">
    <property type="entry name" value="MnmG"/>
</dbReference>
<dbReference type="InterPro" id="IPR002218">
    <property type="entry name" value="MnmG-rel"/>
</dbReference>
<dbReference type="InterPro" id="IPR020595">
    <property type="entry name" value="MnmG-rel_CS"/>
</dbReference>
<dbReference type="InterPro" id="IPR026904">
    <property type="entry name" value="MnmG_C"/>
</dbReference>
<dbReference type="InterPro" id="IPR047001">
    <property type="entry name" value="MnmG_C_subdom"/>
</dbReference>
<dbReference type="InterPro" id="IPR044920">
    <property type="entry name" value="MnmG_C_subdom_sf"/>
</dbReference>
<dbReference type="InterPro" id="IPR040131">
    <property type="entry name" value="MnmG_N"/>
</dbReference>
<dbReference type="NCBIfam" id="TIGR00136">
    <property type="entry name" value="mnmG_gidA"/>
    <property type="match status" value="1"/>
</dbReference>
<dbReference type="PANTHER" id="PTHR11806">
    <property type="entry name" value="GLUCOSE INHIBITED DIVISION PROTEIN A"/>
    <property type="match status" value="1"/>
</dbReference>
<dbReference type="PANTHER" id="PTHR11806:SF0">
    <property type="entry name" value="PROTEIN MTO1 HOMOLOG, MITOCHONDRIAL"/>
    <property type="match status" value="1"/>
</dbReference>
<dbReference type="Pfam" id="PF01134">
    <property type="entry name" value="GIDA"/>
    <property type="match status" value="1"/>
</dbReference>
<dbReference type="Pfam" id="PF21680">
    <property type="entry name" value="GIDA_C_1st"/>
    <property type="match status" value="1"/>
</dbReference>
<dbReference type="Pfam" id="PF13932">
    <property type="entry name" value="SAM_GIDA_C"/>
    <property type="match status" value="1"/>
</dbReference>
<dbReference type="SMART" id="SM01228">
    <property type="entry name" value="GIDA_assoc_3"/>
    <property type="match status" value="1"/>
</dbReference>
<dbReference type="SUPFAM" id="SSF51905">
    <property type="entry name" value="FAD/NAD(P)-binding domain"/>
    <property type="match status" value="1"/>
</dbReference>
<dbReference type="PROSITE" id="PS01280">
    <property type="entry name" value="GIDA_1"/>
    <property type="match status" value="1"/>
</dbReference>
<dbReference type="PROSITE" id="PS01281">
    <property type="entry name" value="GIDA_2"/>
    <property type="match status" value="1"/>
</dbReference>
<name>MNMG_PROMT</name>